<proteinExistence type="evidence at transcript level"/>
<name>EP1L1_ARATH</name>
<gene>
    <name evidence="11" type="ordered locus">At1g78820</name>
    <name evidence="12" type="ORF">F9K20.13</name>
</gene>
<accession>Q9ZVA1</accession>
<accession>Q8L854</accession>
<protein>
    <recommendedName>
        <fullName evidence="9">EP1-like glycoprotein 1</fullName>
    </recommendedName>
</protein>
<reference key="1">
    <citation type="journal article" date="2000" name="Nature">
        <title>Sequence and analysis of chromosome 1 of the plant Arabidopsis thaliana.</title>
        <authorList>
            <person name="Theologis A."/>
            <person name="Ecker J.R."/>
            <person name="Palm C.J."/>
            <person name="Federspiel N.A."/>
            <person name="Kaul S."/>
            <person name="White O."/>
            <person name="Alonso J."/>
            <person name="Altafi H."/>
            <person name="Araujo R."/>
            <person name="Bowman C.L."/>
            <person name="Brooks S.Y."/>
            <person name="Buehler E."/>
            <person name="Chan A."/>
            <person name="Chao Q."/>
            <person name="Chen H."/>
            <person name="Cheuk R.F."/>
            <person name="Chin C.W."/>
            <person name="Chung M.K."/>
            <person name="Conn L."/>
            <person name="Conway A.B."/>
            <person name="Conway A.R."/>
            <person name="Creasy T.H."/>
            <person name="Dewar K."/>
            <person name="Dunn P."/>
            <person name="Etgu P."/>
            <person name="Feldblyum T.V."/>
            <person name="Feng J.-D."/>
            <person name="Fong B."/>
            <person name="Fujii C.Y."/>
            <person name="Gill J.E."/>
            <person name="Goldsmith A.D."/>
            <person name="Haas B."/>
            <person name="Hansen N.F."/>
            <person name="Hughes B."/>
            <person name="Huizar L."/>
            <person name="Hunter J.L."/>
            <person name="Jenkins J."/>
            <person name="Johnson-Hopson C."/>
            <person name="Khan S."/>
            <person name="Khaykin E."/>
            <person name="Kim C.J."/>
            <person name="Koo H.L."/>
            <person name="Kremenetskaia I."/>
            <person name="Kurtz D.B."/>
            <person name="Kwan A."/>
            <person name="Lam B."/>
            <person name="Langin-Hooper S."/>
            <person name="Lee A."/>
            <person name="Lee J.M."/>
            <person name="Lenz C.A."/>
            <person name="Li J.H."/>
            <person name="Li Y.-P."/>
            <person name="Lin X."/>
            <person name="Liu S.X."/>
            <person name="Liu Z.A."/>
            <person name="Luros J.S."/>
            <person name="Maiti R."/>
            <person name="Marziali A."/>
            <person name="Militscher J."/>
            <person name="Miranda M."/>
            <person name="Nguyen M."/>
            <person name="Nierman W.C."/>
            <person name="Osborne B.I."/>
            <person name="Pai G."/>
            <person name="Peterson J."/>
            <person name="Pham P.K."/>
            <person name="Rizzo M."/>
            <person name="Rooney T."/>
            <person name="Rowley D."/>
            <person name="Sakano H."/>
            <person name="Salzberg S.L."/>
            <person name="Schwartz J.R."/>
            <person name="Shinn P."/>
            <person name="Southwick A.M."/>
            <person name="Sun H."/>
            <person name="Tallon L.J."/>
            <person name="Tambunga G."/>
            <person name="Toriumi M.J."/>
            <person name="Town C.D."/>
            <person name="Utterback T."/>
            <person name="Van Aken S."/>
            <person name="Vaysberg M."/>
            <person name="Vysotskaia V.S."/>
            <person name="Walker M."/>
            <person name="Wu D."/>
            <person name="Yu G."/>
            <person name="Fraser C.M."/>
            <person name="Venter J.C."/>
            <person name="Davis R.W."/>
        </authorList>
    </citation>
    <scope>NUCLEOTIDE SEQUENCE [LARGE SCALE GENOMIC DNA]</scope>
    <source>
        <strain>cv. Columbia</strain>
    </source>
</reference>
<reference key="2">
    <citation type="journal article" date="2017" name="Plant J.">
        <title>Araport11: a complete reannotation of the Arabidopsis thaliana reference genome.</title>
        <authorList>
            <person name="Cheng C.Y."/>
            <person name="Krishnakumar V."/>
            <person name="Chan A.P."/>
            <person name="Thibaud-Nissen F."/>
            <person name="Schobel S."/>
            <person name="Town C.D."/>
        </authorList>
    </citation>
    <scope>GENOME REANNOTATION</scope>
    <source>
        <strain>cv. Columbia</strain>
    </source>
</reference>
<reference key="3">
    <citation type="journal article" date="2003" name="Science">
        <title>Empirical analysis of transcriptional activity in the Arabidopsis genome.</title>
        <authorList>
            <person name="Yamada K."/>
            <person name="Lim J."/>
            <person name="Dale J.M."/>
            <person name="Chen H."/>
            <person name="Shinn P."/>
            <person name="Palm C.J."/>
            <person name="Southwick A.M."/>
            <person name="Wu H.C."/>
            <person name="Kim C.J."/>
            <person name="Nguyen M."/>
            <person name="Pham P.K."/>
            <person name="Cheuk R.F."/>
            <person name="Karlin-Newmann G."/>
            <person name="Liu S.X."/>
            <person name="Lam B."/>
            <person name="Sakano H."/>
            <person name="Wu T."/>
            <person name="Yu G."/>
            <person name="Miranda M."/>
            <person name="Quach H.L."/>
            <person name="Tripp M."/>
            <person name="Chang C.H."/>
            <person name="Lee J.M."/>
            <person name="Toriumi M.J."/>
            <person name="Chan M.M."/>
            <person name="Tang C.C."/>
            <person name="Onodera C.S."/>
            <person name="Deng J.M."/>
            <person name="Akiyama K."/>
            <person name="Ansari Y."/>
            <person name="Arakawa T."/>
            <person name="Banh J."/>
            <person name="Banno F."/>
            <person name="Bowser L."/>
            <person name="Brooks S.Y."/>
            <person name="Carninci P."/>
            <person name="Chao Q."/>
            <person name="Choy N."/>
            <person name="Enju A."/>
            <person name="Goldsmith A.D."/>
            <person name="Gurjal M."/>
            <person name="Hansen N.F."/>
            <person name="Hayashizaki Y."/>
            <person name="Johnson-Hopson C."/>
            <person name="Hsuan V.W."/>
            <person name="Iida K."/>
            <person name="Karnes M."/>
            <person name="Khan S."/>
            <person name="Koesema E."/>
            <person name="Ishida J."/>
            <person name="Jiang P.X."/>
            <person name="Jones T."/>
            <person name="Kawai J."/>
            <person name="Kamiya A."/>
            <person name="Meyers C."/>
            <person name="Nakajima M."/>
            <person name="Narusaka M."/>
            <person name="Seki M."/>
            <person name="Sakurai T."/>
            <person name="Satou M."/>
            <person name="Tamse R."/>
            <person name="Vaysberg M."/>
            <person name="Wallender E.K."/>
            <person name="Wong C."/>
            <person name="Yamamura Y."/>
            <person name="Yuan S."/>
            <person name="Shinozaki K."/>
            <person name="Davis R.W."/>
            <person name="Theologis A."/>
            <person name="Ecker J.R."/>
        </authorList>
    </citation>
    <scope>NUCLEOTIDE SEQUENCE [LARGE SCALE MRNA]</scope>
    <source>
        <strain>cv. Columbia</strain>
    </source>
</reference>
<reference key="4">
    <citation type="journal article" date="2006" name="Plant Cell">
        <title>Functional profiling reveals that only a small number of phytochrome-regulated early-response genes in Arabidopsis are necessary for optimal deetiolation.</title>
        <authorList>
            <person name="Khanna R."/>
            <person name="Shen Y."/>
            <person name="Toledo-Ortiz G."/>
            <person name="Kikis E.A."/>
            <person name="Johannesson H."/>
            <person name="Hwang Y.-S."/>
            <person name="Quail P.H."/>
        </authorList>
    </citation>
    <scope>DISRUPTION PHENOTYPE</scope>
</reference>
<reference key="5">
    <citation type="journal article" date="2006" name="Plant J.">
        <title>phyA dominates in transduction of red-light signals to rapidly responding genes at the initiation of Arabidopsis seedling de-etiolation.</title>
        <authorList>
            <person name="Tepperman J.M."/>
            <person name="Hwang Y.S."/>
            <person name="Quail P.H."/>
        </authorList>
    </citation>
    <scope>INDUCTION BY RED LIGHT</scope>
</reference>
<reference key="6">
    <citation type="journal article" date="2008" name="BMC Plant Biol.">
        <title>A new picture of cell wall protein dynamics in elongating cells of Arabidopsis thaliana: confirmed actors and newcomers.</title>
        <authorList>
            <person name="Irshad M."/>
            <person name="Canut H."/>
            <person name="Borderies G."/>
            <person name="Pont-Lezica R."/>
            <person name="Jamet E."/>
        </authorList>
    </citation>
    <scope>SUBCELLULAR LOCATION</scope>
</reference>
<evidence type="ECO:0000250" key="1">
    <source>
        <dbReference type="UniProtKB" id="Q9ZVA2"/>
    </source>
</evidence>
<evidence type="ECO:0000255" key="2"/>
<evidence type="ECO:0000255" key="3">
    <source>
        <dbReference type="PROSITE-ProRule" id="PRU00038"/>
    </source>
</evidence>
<evidence type="ECO:0000255" key="4">
    <source>
        <dbReference type="PROSITE-ProRule" id="PRU00315"/>
    </source>
</evidence>
<evidence type="ECO:0000255" key="5">
    <source>
        <dbReference type="PROSITE-ProRule" id="PRU00498"/>
    </source>
</evidence>
<evidence type="ECO:0000269" key="6">
    <source>
    </source>
</evidence>
<evidence type="ECO:0000269" key="7">
    <source>
    </source>
</evidence>
<evidence type="ECO:0000269" key="8">
    <source>
    </source>
</evidence>
<evidence type="ECO:0000303" key="9">
    <source>
    </source>
</evidence>
<evidence type="ECO:0000305" key="10"/>
<evidence type="ECO:0000312" key="11">
    <source>
        <dbReference type="Araport" id="AT1G78820"/>
    </source>
</evidence>
<evidence type="ECO:0000312" key="12">
    <source>
        <dbReference type="EMBL" id="AAC83044.1"/>
    </source>
</evidence>
<dbReference type="EMBL" id="AC005679">
    <property type="protein sequence ID" value="AAC83044.1"/>
    <property type="molecule type" value="Genomic_DNA"/>
</dbReference>
<dbReference type="EMBL" id="CP002684">
    <property type="protein sequence ID" value="AEE36159.1"/>
    <property type="molecule type" value="Genomic_DNA"/>
</dbReference>
<dbReference type="EMBL" id="AY035116">
    <property type="protein sequence ID" value="AAK59621.1"/>
    <property type="molecule type" value="mRNA"/>
</dbReference>
<dbReference type="EMBL" id="AY056346">
    <property type="protein sequence ID" value="AAL07195.1"/>
    <property type="molecule type" value="mRNA"/>
</dbReference>
<dbReference type="EMBL" id="AY062708">
    <property type="protein sequence ID" value="AAL32786.1"/>
    <property type="molecule type" value="mRNA"/>
</dbReference>
<dbReference type="EMBL" id="AY093367">
    <property type="protein sequence ID" value="AAM13366.1"/>
    <property type="molecule type" value="mRNA"/>
</dbReference>
<dbReference type="EMBL" id="AY120736">
    <property type="protein sequence ID" value="AAM53294.1"/>
    <property type="molecule type" value="mRNA"/>
</dbReference>
<dbReference type="PIR" id="E96817">
    <property type="entry name" value="E96817"/>
</dbReference>
<dbReference type="RefSeq" id="NP_178003.1">
    <property type="nucleotide sequence ID" value="NM_106530.3"/>
</dbReference>
<dbReference type="SMR" id="Q9ZVA1"/>
<dbReference type="FunCoup" id="Q9ZVA1">
    <property type="interactions" value="288"/>
</dbReference>
<dbReference type="STRING" id="3702.Q9ZVA1"/>
<dbReference type="GlyGen" id="Q9ZVA1">
    <property type="glycosylation" value="7 sites"/>
</dbReference>
<dbReference type="PaxDb" id="3702-AT1G78820.1"/>
<dbReference type="ProteomicsDB" id="220618"/>
<dbReference type="EnsemblPlants" id="AT1G78820.1">
    <property type="protein sequence ID" value="AT1G78820.1"/>
    <property type="gene ID" value="AT1G78820"/>
</dbReference>
<dbReference type="GeneID" id="844219"/>
<dbReference type="Gramene" id="AT1G78820.1">
    <property type="protein sequence ID" value="AT1G78820.1"/>
    <property type="gene ID" value="AT1G78820"/>
</dbReference>
<dbReference type="KEGG" id="ath:AT1G78820"/>
<dbReference type="Araport" id="AT1G78820"/>
<dbReference type="TAIR" id="AT1G78820"/>
<dbReference type="eggNOG" id="ENOG502QU13">
    <property type="taxonomic scope" value="Eukaryota"/>
</dbReference>
<dbReference type="HOGENOM" id="CLU_043351_0_0_1"/>
<dbReference type="InParanoid" id="Q9ZVA1"/>
<dbReference type="OMA" id="RGMCVGC"/>
<dbReference type="PhylomeDB" id="Q9ZVA1"/>
<dbReference type="PRO" id="PR:Q9ZVA1"/>
<dbReference type="Proteomes" id="UP000006548">
    <property type="component" value="Chromosome 1"/>
</dbReference>
<dbReference type="ExpressionAtlas" id="Q9ZVA1">
    <property type="expression patterns" value="baseline and differential"/>
</dbReference>
<dbReference type="GO" id="GO:0048046">
    <property type="term" value="C:apoplast"/>
    <property type="evidence" value="ECO:0007005"/>
    <property type="project" value="TAIR"/>
</dbReference>
<dbReference type="GO" id="GO:0030246">
    <property type="term" value="F:carbohydrate binding"/>
    <property type="evidence" value="ECO:0007669"/>
    <property type="project" value="UniProtKB-KW"/>
</dbReference>
<dbReference type="CDD" id="cd00028">
    <property type="entry name" value="B_lectin"/>
    <property type="match status" value="1"/>
</dbReference>
<dbReference type="FunFam" id="2.90.10.10:FF:000018">
    <property type="entry name" value="EP1-like glycoprotein 2"/>
    <property type="match status" value="1"/>
</dbReference>
<dbReference type="FunFam" id="2.90.10.30:FF:000003">
    <property type="entry name" value="Os04g0303100 protein"/>
    <property type="match status" value="1"/>
</dbReference>
<dbReference type="Gene3D" id="2.90.10.10">
    <property type="entry name" value="Bulb-type lectin domain"/>
    <property type="match status" value="1"/>
</dbReference>
<dbReference type="InterPro" id="IPR001480">
    <property type="entry name" value="Bulb-type_lectin_dom"/>
</dbReference>
<dbReference type="InterPro" id="IPR036426">
    <property type="entry name" value="Bulb-type_lectin_dom_sf"/>
</dbReference>
<dbReference type="InterPro" id="IPR003609">
    <property type="entry name" value="Pan_app"/>
</dbReference>
<dbReference type="InterPro" id="IPR035446">
    <property type="entry name" value="SLSG/EP1"/>
</dbReference>
<dbReference type="PANTHER" id="PTHR32444">
    <property type="entry name" value="BULB-TYPE LECTIN DOMAIN-CONTAINING PROTEIN"/>
    <property type="match status" value="1"/>
</dbReference>
<dbReference type="PANTHER" id="PTHR32444:SF10">
    <property type="entry name" value="CURCULIN-LIKE (MANNOSE-BINDING) LECTIN FAMILY PROTEIN-RELATED"/>
    <property type="match status" value="1"/>
</dbReference>
<dbReference type="Pfam" id="PF01453">
    <property type="entry name" value="B_lectin"/>
    <property type="match status" value="1"/>
</dbReference>
<dbReference type="PIRSF" id="PIRSF002686">
    <property type="entry name" value="SLG"/>
    <property type="match status" value="1"/>
</dbReference>
<dbReference type="SMART" id="SM00108">
    <property type="entry name" value="B_lectin"/>
    <property type="match status" value="1"/>
</dbReference>
<dbReference type="SUPFAM" id="SSF51110">
    <property type="entry name" value="alpha-D-mannose-specific plant lectins"/>
    <property type="match status" value="1"/>
</dbReference>
<dbReference type="PROSITE" id="PS50927">
    <property type="entry name" value="BULB_LECTIN"/>
    <property type="match status" value="1"/>
</dbReference>
<dbReference type="PROSITE" id="PS50948">
    <property type="entry name" value="PAN"/>
    <property type="match status" value="1"/>
</dbReference>
<keyword id="KW-0134">Cell wall</keyword>
<keyword id="KW-1015">Disulfide bond</keyword>
<keyword id="KW-0325">Glycoprotein</keyword>
<keyword id="KW-0430">Lectin</keyword>
<keyword id="KW-1185">Reference proteome</keyword>
<keyword id="KW-0702">S-nitrosylation</keyword>
<keyword id="KW-0964">Secreted</keyword>
<keyword id="KW-0732">Signal</keyword>
<organism>
    <name type="scientific">Arabidopsis thaliana</name>
    <name type="common">Mouse-ear cress</name>
    <dbReference type="NCBI Taxonomy" id="3702"/>
    <lineage>
        <taxon>Eukaryota</taxon>
        <taxon>Viridiplantae</taxon>
        <taxon>Streptophyta</taxon>
        <taxon>Embryophyta</taxon>
        <taxon>Tracheophyta</taxon>
        <taxon>Spermatophyta</taxon>
        <taxon>Magnoliopsida</taxon>
        <taxon>eudicotyledons</taxon>
        <taxon>Gunneridae</taxon>
        <taxon>Pentapetalae</taxon>
        <taxon>rosids</taxon>
        <taxon>malvids</taxon>
        <taxon>Brassicales</taxon>
        <taxon>Brassicaceae</taxon>
        <taxon>Camelineae</taxon>
        <taxon>Arabidopsis</taxon>
    </lineage>
</organism>
<sequence>MLRFDYLLITALAISTVSVVMAQVPPEKQFRVLNEPGYAPYITEYDASYRFLNSPNQNFFTIPFQLMFYNTTPSAYVLALRVGTRRDMSFTRWIWDANRNNPVGDNSTLSFGRNGNLVLAELNGQVKWQTNTANKGVTGFQILPNGNMVLHDKHGKFVWQSFDHPTDTLLVGQSLKVNGVNKLVSRTSDMNGSDGPYSMVLDNKGLTMYVNKTGTPLVYGGWTDHDFRGTVTFAVTREFDNLTEPSAYELLLEPAPQPATNPGNNRRLLQVRPIGSGGGTLNLNKINYNGTISYLRLGSDGSLKAFSYFPAATYLEWEETFAFFSNYFVRQCGLPTFCGDYGYCDRGMCVGCPTPKGLLAWSDKCAPPKTTQFCSGGKGKAVNYYKIVGVEHFTGPYVNDGQGPTSVNDCKAKCDRDCKCLGYFYKEKDKKCLLAPLLGTLIKDANTSSVAYIKY</sequence>
<comment type="subcellular location">
    <subcellularLocation>
        <location evidence="8">Secreted</location>
        <location evidence="8">Cell wall</location>
    </subcellularLocation>
</comment>
<comment type="induction">
    <text evidence="7">Up-regulated by continuous red light.</text>
</comment>
<comment type="disruption phenotype">
    <text evidence="6">Defect in both hypocotyl and cotyledon photoresponsiveness during deetiolation.</text>
</comment>
<feature type="signal peptide" evidence="2">
    <location>
        <begin position="1"/>
        <end position="22"/>
    </location>
</feature>
<feature type="chain" id="PRO_5009974821" description="EP1-like glycoprotein 1" evidence="2">
    <location>
        <begin position="23"/>
        <end position="455"/>
    </location>
</feature>
<feature type="domain" description="Bulb-type lectin" evidence="3">
    <location>
        <begin position="43"/>
        <end position="163"/>
    </location>
</feature>
<feature type="domain" description="PAN" evidence="4">
    <location>
        <begin position="374"/>
        <end position="455"/>
    </location>
</feature>
<feature type="modified residue" description="S-nitrosocysteine" evidence="1">
    <location>
        <position position="374"/>
    </location>
</feature>
<feature type="glycosylation site" description="N-linked (GlcNAc...) asparagine" evidence="5">
    <location>
        <position position="106"/>
    </location>
</feature>
<feature type="glycosylation site" description="N-linked (GlcNAc...) asparagine" evidence="5">
    <location>
        <position position="191"/>
    </location>
</feature>
<feature type="glycosylation site" description="N-linked (GlcNAc...) asparagine" evidence="5">
    <location>
        <position position="211"/>
    </location>
</feature>
<feature type="glycosylation site" description="N-linked (GlcNAc...) asparagine" evidence="5">
    <location>
        <position position="241"/>
    </location>
</feature>
<feature type="glycosylation site" description="N-linked (GlcNAc...) asparagine" evidence="5">
    <location>
        <position position="289"/>
    </location>
</feature>
<feature type="glycosylation site" description="N-linked (GlcNAc...) asparagine" evidence="5">
    <location>
        <position position="446"/>
    </location>
</feature>
<feature type="disulfide bond" evidence="4">
    <location>
        <begin position="410"/>
        <end position="432"/>
    </location>
</feature>
<feature type="disulfide bond" evidence="4">
    <location>
        <begin position="414"/>
        <end position="420"/>
    </location>
</feature>
<feature type="sequence conflict" description="In Ref. 3; AAM53294." evidence="10" ref="3">
    <original>E</original>
    <variation>K</variation>
    <location>
        <position position="44"/>
    </location>
</feature>